<accession>B2JEI0</accession>
<organism>
    <name type="scientific">Paraburkholderia phymatum (strain DSM 17167 / CIP 108236 / LMG 21445 / STM815)</name>
    <name type="common">Burkholderia phymatum</name>
    <dbReference type="NCBI Taxonomy" id="391038"/>
    <lineage>
        <taxon>Bacteria</taxon>
        <taxon>Pseudomonadati</taxon>
        <taxon>Pseudomonadota</taxon>
        <taxon>Betaproteobacteria</taxon>
        <taxon>Burkholderiales</taxon>
        <taxon>Burkholderiaceae</taxon>
        <taxon>Paraburkholderia</taxon>
    </lineage>
</organism>
<feature type="chain" id="PRO_1000129329" description="Ribonuclease PH">
    <location>
        <begin position="1"/>
        <end position="246"/>
    </location>
</feature>
<feature type="binding site" evidence="1">
    <location>
        <position position="91"/>
    </location>
    <ligand>
        <name>phosphate</name>
        <dbReference type="ChEBI" id="CHEBI:43474"/>
        <note>substrate</note>
    </ligand>
</feature>
<feature type="binding site" evidence="1">
    <location>
        <begin position="129"/>
        <end position="131"/>
    </location>
    <ligand>
        <name>phosphate</name>
        <dbReference type="ChEBI" id="CHEBI:43474"/>
        <note>substrate</note>
    </ligand>
</feature>
<protein>
    <recommendedName>
        <fullName evidence="1">Ribonuclease PH</fullName>
        <shortName evidence="1">RNase PH</shortName>
        <ecNumber evidence="1">2.7.7.56</ecNumber>
    </recommendedName>
    <alternativeName>
        <fullName evidence="1">tRNA nucleotidyltransferase</fullName>
    </alternativeName>
</protein>
<evidence type="ECO:0000255" key="1">
    <source>
        <dbReference type="HAMAP-Rule" id="MF_00564"/>
    </source>
</evidence>
<reference key="1">
    <citation type="journal article" date="2014" name="Stand. Genomic Sci.">
        <title>Complete genome sequence of Burkholderia phymatum STM815(T), a broad host range and efficient nitrogen-fixing symbiont of Mimosa species.</title>
        <authorList>
            <person name="Moulin L."/>
            <person name="Klonowska A."/>
            <person name="Caroline B."/>
            <person name="Booth K."/>
            <person name="Vriezen J.A."/>
            <person name="Melkonian R."/>
            <person name="James E.K."/>
            <person name="Young J.P."/>
            <person name="Bena G."/>
            <person name="Hauser L."/>
            <person name="Land M."/>
            <person name="Kyrpides N."/>
            <person name="Bruce D."/>
            <person name="Chain P."/>
            <person name="Copeland A."/>
            <person name="Pitluck S."/>
            <person name="Woyke T."/>
            <person name="Lizotte-Waniewski M."/>
            <person name="Bristow J."/>
            <person name="Riley M."/>
        </authorList>
    </citation>
    <scope>NUCLEOTIDE SEQUENCE [LARGE SCALE GENOMIC DNA]</scope>
    <source>
        <strain>DSM 17167 / CIP 108236 / LMG 21445 / STM815</strain>
    </source>
</reference>
<comment type="function">
    <text evidence="1">Phosphorolytic 3'-5' exoribonuclease that plays an important role in tRNA 3'-end maturation. Removes nucleotide residues following the 3'-CCA terminus of tRNAs; can also add nucleotides to the ends of RNA molecules by using nucleoside diphosphates as substrates, but this may not be physiologically important. Probably plays a role in initiation of 16S rRNA degradation (leading to ribosome degradation) during starvation.</text>
</comment>
<comment type="catalytic activity">
    <reaction evidence="1">
        <text>tRNA(n+1) + phosphate = tRNA(n) + a ribonucleoside 5'-diphosphate</text>
        <dbReference type="Rhea" id="RHEA:10628"/>
        <dbReference type="Rhea" id="RHEA-COMP:17343"/>
        <dbReference type="Rhea" id="RHEA-COMP:17344"/>
        <dbReference type="ChEBI" id="CHEBI:43474"/>
        <dbReference type="ChEBI" id="CHEBI:57930"/>
        <dbReference type="ChEBI" id="CHEBI:173114"/>
        <dbReference type="EC" id="2.7.7.56"/>
    </reaction>
</comment>
<comment type="subunit">
    <text evidence="1">Homohexameric ring arranged as a trimer of dimers.</text>
</comment>
<comment type="similarity">
    <text evidence="1">Belongs to the RNase PH family.</text>
</comment>
<proteinExistence type="inferred from homology"/>
<sequence length="246" mass="26656">MNDITKRPSGRTADQLRDVRITRHYTKHAEGSVLVEFGDTKVICTASIAESVPAFLRDRGQGWLTAEYGMLPRATHTRSDREAARGKQTGRTQEIQRLIGRALRSVFDLERLGARTLHIDCDVIQADGGTRTASITGAFVAARDAVAKLLATGRIETSPITDYVAAISVGVFDGIPVLDLDYDEDSQCDTDMNVVMTGDGGFVEIQGTAEGVPFSRDEMNKLLDLAQAGIATLIAKQKEALESKGE</sequence>
<gene>
    <name evidence="1" type="primary">rph</name>
    <name type="ordered locus">Bphy_0667</name>
</gene>
<dbReference type="EC" id="2.7.7.56" evidence="1"/>
<dbReference type="EMBL" id="CP001043">
    <property type="protein sequence ID" value="ACC69857.1"/>
    <property type="molecule type" value="Genomic_DNA"/>
</dbReference>
<dbReference type="RefSeq" id="WP_012400078.1">
    <property type="nucleotide sequence ID" value="NC_010622.1"/>
</dbReference>
<dbReference type="SMR" id="B2JEI0"/>
<dbReference type="STRING" id="391038.Bphy_0667"/>
<dbReference type="KEGG" id="bph:Bphy_0667"/>
<dbReference type="eggNOG" id="COG0689">
    <property type="taxonomic scope" value="Bacteria"/>
</dbReference>
<dbReference type="HOGENOM" id="CLU_050858_0_0_4"/>
<dbReference type="OrthoDB" id="9802265at2"/>
<dbReference type="Proteomes" id="UP000001192">
    <property type="component" value="Chromosome 1"/>
</dbReference>
<dbReference type="GO" id="GO:0000175">
    <property type="term" value="F:3'-5'-RNA exonuclease activity"/>
    <property type="evidence" value="ECO:0007669"/>
    <property type="project" value="UniProtKB-UniRule"/>
</dbReference>
<dbReference type="GO" id="GO:0000049">
    <property type="term" value="F:tRNA binding"/>
    <property type="evidence" value="ECO:0007669"/>
    <property type="project" value="UniProtKB-UniRule"/>
</dbReference>
<dbReference type="GO" id="GO:0009022">
    <property type="term" value="F:tRNA nucleotidyltransferase activity"/>
    <property type="evidence" value="ECO:0007669"/>
    <property type="project" value="UniProtKB-UniRule"/>
</dbReference>
<dbReference type="GO" id="GO:0016075">
    <property type="term" value="P:rRNA catabolic process"/>
    <property type="evidence" value="ECO:0007669"/>
    <property type="project" value="UniProtKB-UniRule"/>
</dbReference>
<dbReference type="GO" id="GO:0006364">
    <property type="term" value="P:rRNA processing"/>
    <property type="evidence" value="ECO:0007669"/>
    <property type="project" value="UniProtKB-KW"/>
</dbReference>
<dbReference type="GO" id="GO:0008033">
    <property type="term" value="P:tRNA processing"/>
    <property type="evidence" value="ECO:0007669"/>
    <property type="project" value="UniProtKB-UniRule"/>
</dbReference>
<dbReference type="CDD" id="cd11362">
    <property type="entry name" value="RNase_PH_bact"/>
    <property type="match status" value="1"/>
</dbReference>
<dbReference type="FunFam" id="3.30.230.70:FF:000003">
    <property type="entry name" value="Ribonuclease PH"/>
    <property type="match status" value="1"/>
</dbReference>
<dbReference type="Gene3D" id="3.30.230.70">
    <property type="entry name" value="GHMP Kinase, N-terminal domain"/>
    <property type="match status" value="1"/>
</dbReference>
<dbReference type="HAMAP" id="MF_00564">
    <property type="entry name" value="RNase_PH"/>
    <property type="match status" value="1"/>
</dbReference>
<dbReference type="InterPro" id="IPR001247">
    <property type="entry name" value="ExoRNase_PH_dom1"/>
</dbReference>
<dbReference type="InterPro" id="IPR015847">
    <property type="entry name" value="ExoRNase_PH_dom2"/>
</dbReference>
<dbReference type="InterPro" id="IPR036345">
    <property type="entry name" value="ExoRNase_PH_dom2_sf"/>
</dbReference>
<dbReference type="InterPro" id="IPR027408">
    <property type="entry name" value="PNPase/RNase_PH_dom_sf"/>
</dbReference>
<dbReference type="InterPro" id="IPR020568">
    <property type="entry name" value="Ribosomal_Su5_D2-typ_SF"/>
</dbReference>
<dbReference type="InterPro" id="IPR050080">
    <property type="entry name" value="RNase_PH"/>
</dbReference>
<dbReference type="InterPro" id="IPR002381">
    <property type="entry name" value="RNase_PH_bac-type"/>
</dbReference>
<dbReference type="InterPro" id="IPR018336">
    <property type="entry name" value="RNase_PH_CS"/>
</dbReference>
<dbReference type="NCBIfam" id="TIGR01966">
    <property type="entry name" value="RNasePH"/>
    <property type="match status" value="1"/>
</dbReference>
<dbReference type="PANTHER" id="PTHR11953">
    <property type="entry name" value="EXOSOME COMPLEX COMPONENT"/>
    <property type="match status" value="1"/>
</dbReference>
<dbReference type="PANTHER" id="PTHR11953:SF0">
    <property type="entry name" value="EXOSOME COMPLEX COMPONENT RRP41"/>
    <property type="match status" value="1"/>
</dbReference>
<dbReference type="Pfam" id="PF01138">
    <property type="entry name" value="RNase_PH"/>
    <property type="match status" value="1"/>
</dbReference>
<dbReference type="Pfam" id="PF03725">
    <property type="entry name" value="RNase_PH_C"/>
    <property type="match status" value="1"/>
</dbReference>
<dbReference type="SUPFAM" id="SSF55666">
    <property type="entry name" value="Ribonuclease PH domain 2-like"/>
    <property type="match status" value="1"/>
</dbReference>
<dbReference type="SUPFAM" id="SSF54211">
    <property type="entry name" value="Ribosomal protein S5 domain 2-like"/>
    <property type="match status" value="1"/>
</dbReference>
<dbReference type="PROSITE" id="PS01277">
    <property type="entry name" value="RIBONUCLEASE_PH"/>
    <property type="match status" value="1"/>
</dbReference>
<name>RNPH_PARP8</name>
<keyword id="KW-0548">Nucleotidyltransferase</keyword>
<keyword id="KW-1185">Reference proteome</keyword>
<keyword id="KW-0694">RNA-binding</keyword>
<keyword id="KW-0698">rRNA processing</keyword>
<keyword id="KW-0808">Transferase</keyword>
<keyword id="KW-0819">tRNA processing</keyword>
<keyword id="KW-0820">tRNA-binding</keyword>